<comment type="function">
    <text evidence="7 8 9">Master transcription factor of stromal fibroblasts for myofibroblastic lineage progression. Orchestrates the functional drift of fibroblasts into myofibroblastic phenotype via TGF-beta signaling by remodeling a super-enhancer landscape. Through this function, plays an essential role in wound healing process (PubMed:35589735). Acts as a transcriptional regulator of muscle creatine kinase (MCK) and so has a role in the establishment of diverse mesodermal muscle types. The protein binds to an A/T-rich element in the muscle creatine enhancer (PubMed:1360403). May play a role in homeostasis and regeneration of bone, white adipose tissue and derm (PubMed:36456880).</text>
</comment>
<comment type="function">
    <molecule>Isoform 1</molecule>
    <text evidence="6">Transcriptional activator, when transfected in fibroblastic or myoblastic cell lines. This activity may be masked by the C-terminal OAR domain.</text>
</comment>
<comment type="function">
    <molecule>Isoform 2</molecule>
    <text evidence="6">Transcriptional repressor, when transfected in fibroblastic or myoblastic cell lines.</text>
</comment>
<comment type="subunit">
    <text evidence="8">Interacts with SMAD3.</text>
</comment>
<comment type="subcellular location">
    <subcellularLocation>
        <location evidence="8">Nucleus</location>
    </subcellularLocation>
</comment>
<comment type="alternative products">
    <event type="alternative splicing"/>
    <isoform>
        <id>P63013-1</id>
        <id>P43271-1</id>
        <name>1</name>
        <name>K2-a</name>
        <name evidence="10">Prx1a</name>
        <sequence type="displayed"/>
    </isoform>
    <isoform>
        <id>P63013-2</id>
        <id>P43271-2</id>
        <name>2</name>
        <name>K2-b</name>
        <name evidence="10">Prx1b</name>
        <sequence type="described" ref="VSP_002279"/>
    </isoform>
</comment>
<comment type="tissue specificity">
    <text evidence="7 9">Expressed in skeletal muscle, heart and uterus (PubMed:1360403). Detected in a limited numbers of cells in connective tissues, in bone, inguinal white adipose tissue and dermis; these cells are thought to be stem cells (PubMed:36456880).</text>
</comment>
<comment type="developmental stage">
    <text evidence="7 9">First expressed at 8.5 dpc in the paraxial and intermediate mesoderm besides the lateral plate mesoderm (PubMed:36456880). At about 9 dpc, detected in the lateral mesoderm and newly formed visceral arches (PubMed:1360403). At 9.5 dpc, expressed in multiple mesoderm segments (PubMed:36456880). Strongly expressed in the visceral arches, newly formed limb buds and facial primordia. Expression in the somites is confined primarily to the dorsal dermamyotome. Also detected in the dorsal aorta. At 10.5 dpc, strong expression is maintained in the visceral arches and facial primordia, as well as in the developing limb buds and dorsal aorta. At 13.5 dpc, highest expression in the limb buds, but not in the central core of the limb, which corresponds to regions of cartilage differentiation. Lower levels in the condensing vertebrae and ribs of the axial skeleton. Detected in the mandibles, which are derived from the visceral arches. Moderate expression levels in intercostal muscles and diaphragm. Also expressed in the developing eye and the meninges of the brain, but not in the brain itself. Not detected in the developing internal organs, such as heart, liver and gut (PubMed:1360403). At 14.5 dpc, expressed in skeletal tissues and the dermis (PubMed:36456880). At 15.5 dpc, moderate expression levels in the perichondrial tissue surrounding the ribs, the intercostal muscles and the diaphragm. Strongly expressed in the distal tips of the phalanges of the digits as well as in the perichondrial tissue surrounding the developing skeleton. At this stage, expression is generally low in the embryo and is only detectable in the face, limbs and axial muscles. Expression in the neural tube (brain and spinal cord) is not be detected at any developmental stage (PubMed:1360403). At postnatal day 1, detected in the skeleton, white adipose tissue and the dermis (PubMed:36456880).</text>
</comment>
<comment type="domain">
    <molecule>Isoform 1</molecule>
    <text evidence="6">The C-terminal OAR domain may be masking the transactivation domains.</text>
</comment>
<comment type="domain">
    <molecule>Isoform 2</molecule>
    <text evidence="6">The C-terminal domain encoded by the alternative exon 4 exhibits repressor activity.</text>
</comment>
<comment type="similarity">
    <text evidence="14">Belongs to the paired homeobox family.</text>
</comment>
<keyword id="KW-0007">Acetylation</keyword>
<keyword id="KW-0025">Alternative splicing</keyword>
<keyword id="KW-0217">Developmental protein</keyword>
<keyword id="KW-0238">DNA-binding</keyword>
<keyword id="KW-0371">Homeobox</keyword>
<keyword id="KW-0539">Nucleus</keyword>
<keyword id="KW-0597">Phosphoprotein</keyword>
<keyword id="KW-1185">Reference proteome</keyword>
<gene>
    <name type="primary">Prrx1</name>
    <name evidence="13" type="synonym">Pmx</name>
    <name type="synonym">Pmx1</name>
</gene>
<proteinExistence type="evidence at protein level"/>
<feature type="chain" id="PRO_0000049252" description="Paired mesoderm homeobox protein 1">
    <location>
        <begin position="1"/>
        <end position="245"/>
    </location>
</feature>
<feature type="DNA-binding region" description="Homeobox" evidence="3">
    <location>
        <begin position="94"/>
        <end position="153"/>
    </location>
</feature>
<feature type="region of interest" description="Disordered" evidence="5">
    <location>
        <begin position="1"/>
        <end position="24"/>
    </location>
</feature>
<feature type="region of interest" description="Disordered" evidence="5">
    <location>
        <begin position="54"/>
        <end position="103"/>
    </location>
</feature>
<feature type="short sequence motif" description="OAR" evidence="4">
    <location>
        <begin position="222"/>
        <end position="235"/>
    </location>
</feature>
<feature type="compositionally biased region" description="Polar residues" evidence="5">
    <location>
        <begin position="69"/>
        <end position="84"/>
    </location>
</feature>
<feature type="modified residue" description="Phosphoserine" evidence="1">
    <location>
        <position position="21"/>
    </location>
</feature>
<feature type="modified residue" description="N6-acetyllysine" evidence="15">
    <location>
        <position position="160"/>
    </location>
</feature>
<feature type="modified residue" description="Phosphoserine" evidence="2">
    <location>
        <position position="197"/>
    </location>
</feature>
<feature type="splice variant" id="VSP_002279" description="In isoform 2." evidence="11 12 13">
    <original>SAMATYSATCANNSPAQGINMANSIANLRLKAKEYSLQRNQVPTVN</original>
    <variation>RSSSLPRCCLHEGLHNGF</variation>
    <location>
        <begin position="200"/>
        <end position="245"/>
    </location>
</feature>
<feature type="mutagenesis site" description="No effect on transcriptional activity." evidence="6">
    <original>S</original>
    <variation>P</variation>
    <location>
        <position position="223"/>
    </location>
</feature>
<feature type="mutagenesis site" description="No effect on transcriptional activity." evidence="6">
    <original>N</original>
    <variation>P</variation>
    <location>
        <position position="226"/>
    </location>
</feature>
<feature type="mutagenesis site" description="Increased transcriptional activation. No effect on DNA binding." evidence="6">
    <original>R</original>
    <variation>A</variation>
    <variation>P</variation>
    <location>
        <position position="228"/>
    </location>
</feature>
<dbReference type="EMBL" id="L06502">
    <property type="protein sequence ID" value="AAA39672.1"/>
    <property type="molecule type" value="mRNA"/>
</dbReference>
<dbReference type="EMBL" id="U03873">
    <property type="protein sequence ID" value="AAC52139.1"/>
    <property type="molecule type" value="mRNA"/>
</dbReference>
<dbReference type="EMBL" id="X59725">
    <property type="protein sequence ID" value="CAA42410.1"/>
    <property type="molecule type" value="mRNA"/>
</dbReference>
<dbReference type="EMBL" id="BC092372">
    <property type="protein sequence ID" value="AAH92372.1"/>
    <property type="molecule type" value="mRNA"/>
</dbReference>
<dbReference type="CCDS" id="CCDS15427.1"/>
<dbReference type="CCDS" id="CCDS15428.1">
    <molecule id="P63013-2"/>
</dbReference>
<dbReference type="PIR" id="I48902">
    <property type="entry name" value="I48902"/>
</dbReference>
<dbReference type="PIR" id="S26076">
    <property type="entry name" value="S26076"/>
</dbReference>
<dbReference type="RefSeq" id="NP_035257.1">
    <molecule id="P63013-1"/>
    <property type="nucleotide sequence ID" value="NM_011127.2"/>
</dbReference>
<dbReference type="RefSeq" id="NP_783617.2">
    <molecule id="P63013-2"/>
    <property type="nucleotide sequence ID" value="NM_175686.3"/>
</dbReference>
<dbReference type="RefSeq" id="XP_006496766.1">
    <molecule id="P63013-2"/>
    <property type="nucleotide sequence ID" value="XM_006496703.5"/>
</dbReference>
<dbReference type="SMR" id="P63013"/>
<dbReference type="BioGRID" id="202269">
    <property type="interactions" value="4"/>
</dbReference>
<dbReference type="FunCoup" id="P63013">
    <property type="interactions" value="2529"/>
</dbReference>
<dbReference type="IntAct" id="P63013">
    <property type="interactions" value="2"/>
</dbReference>
<dbReference type="STRING" id="10090.ENSMUSP00000027878"/>
<dbReference type="GlyGen" id="P63013">
    <property type="glycosylation" value="2 sites, 1 N-linked glycan (1 site), 1 O-linked glycan (1 site)"/>
</dbReference>
<dbReference type="iPTMnet" id="P63013"/>
<dbReference type="PhosphoSitePlus" id="P63013"/>
<dbReference type="jPOST" id="P63013"/>
<dbReference type="PaxDb" id="10090-ENSMUSP00000027878"/>
<dbReference type="ProteomicsDB" id="291820"/>
<dbReference type="ProteomicsDB" id="291821">
    <molecule id="P63013-2"/>
</dbReference>
<dbReference type="Antibodypedia" id="34372">
    <property type="antibodies" value="441 antibodies from 30 providers"/>
</dbReference>
<dbReference type="DNASU" id="18933"/>
<dbReference type="Ensembl" id="ENSMUST00000027878.14">
    <molecule id="P63013-1"/>
    <property type="protein sequence ID" value="ENSMUSP00000027878.8"/>
    <property type="gene ID" value="ENSMUSG00000026586.17"/>
</dbReference>
<dbReference type="Ensembl" id="ENSMUST00000075805.13">
    <molecule id="P63013-2"/>
    <property type="protein sequence ID" value="ENSMUSP00000075203.7"/>
    <property type="gene ID" value="ENSMUSG00000026586.17"/>
</dbReference>
<dbReference type="GeneID" id="18933"/>
<dbReference type="KEGG" id="mmu:18933"/>
<dbReference type="UCSC" id="uc007dhh.1">
    <molecule id="P63013-2"/>
    <property type="organism name" value="mouse"/>
</dbReference>
<dbReference type="UCSC" id="uc007dhi.1">
    <property type="organism name" value="mouse"/>
</dbReference>
<dbReference type="AGR" id="MGI:97712"/>
<dbReference type="CTD" id="5396"/>
<dbReference type="MGI" id="MGI:97712">
    <property type="gene designation" value="Prrx1"/>
</dbReference>
<dbReference type="VEuPathDB" id="HostDB:ENSMUSG00000026586"/>
<dbReference type="eggNOG" id="KOG0490">
    <property type="taxonomic scope" value="Eukaryota"/>
</dbReference>
<dbReference type="GeneTree" id="ENSGT00940000159466"/>
<dbReference type="InParanoid" id="P63013"/>
<dbReference type="OMA" id="SCALANH"/>
<dbReference type="OrthoDB" id="6159439at2759"/>
<dbReference type="PhylomeDB" id="P63013"/>
<dbReference type="TreeFam" id="TF351612"/>
<dbReference type="BioGRID-ORCS" id="18933">
    <property type="hits" value="5 hits in 79 CRISPR screens"/>
</dbReference>
<dbReference type="ChiTaRS" id="Prrx1">
    <property type="organism name" value="mouse"/>
</dbReference>
<dbReference type="PRO" id="PR:P63013"/>
<dbReference type="Proteomes" id="UP000000589">
    <property type="component" value="Chromosome 1"/>
</dbReference>
<dbReference type="RNAct" id="P63013">
    <property type="molecule type" value="protein"/>
</dbReference>
<dbReference type="Bgee" id="ENSMUSG00000026586">
    <property type="expression patterns" value="Expressed in secondary palatal shelf and 316 other cell types or tissues"/>
</dbReference>
<dbReference type="ExpressionAtlas" id="P63013">
    <property type="expression patterns" value="baseline and differential"/>
</dbReference>
<dbReference type="GO" id="GO:0005829">
    <property type="term" value="C:cytosol"/>
    <property type="evidence" value="ECO:0007669"/>
    <property type="project" value="Ensembl"/>
</dbReference>
<dbReference type="GO" id="GO:0005654">
    <property type="term" value="C:nucleoplasm"/>
    <property type="evidence" value="ECO:0007669"/>
    <property type="project" value="Ensembl"/>
</dbReference>
<dbReference type="GO" id="GO:0005634">
    <property type="term" value="C:nucleus"/>
    <property type="evidence" value="ECO:0000314"/>
    <property type="project" value="MGI"/>
</dbReference>
<dbReference type="GO" id="GO:0003677">
    <property type="term" value="F:DNA binding"/>
    <property type="evidence" value="ECO:0000314"/>
    <property type="project" value="MGI"/>
</dbReference>
<dbReference type="GO" id="GO:0001228">
    <property type="term" value="F:DNA-binding transcription activator activity, RNA polymerase II-specific"/>
    <property type="evidence" value="ECO:0000314"/>
    <property type="project" value="MGI"/>
</dbReference>
<dbReference type="GO" id="GO:0001227">
    <property type="term" value="F:DNA-binding transcription repressor activity, RNA polymerase II-specific"/>
    <property type="evidence" value="ECO:0000314"/>
    <property type="project" value="NTNU_SB"/>
</dbReference>
<dbReference type="GO" id="GO:0071837">
    <property type="term" value="F:HMG box domain binding"/>
    <property type="evidence" value="ECO:0000353"/>
    <property type="project" value="UniProtKB"/>
</dbReference>
<dbReference type="GO" id="GO:0000978">
    <property type="term" value="F:RNA polymerase II cis-regulatory region sequence-specific DNA binding"/>
    <property type="evidence" value="ECO:0000314"/>
    <property type="project" value="NTNU_SB"/>
</dbReference>
<dbReference type="GO" id="GO:0016251">
    <property type="term" value="F:RNA polymerase II general transcription initiation factor activity"/>
    <property type="evidence" value="ECO:0000314"/>
    <property type="project" value="MGI"/>
</dbReference>
<dbReference type="GO" id="GO:0061629">
    <property type="term" value="F:RNA polymerase II-specific DNA-binding transcription factor binding"/>
    <property type="evidence" value="ECO:0007669"/>
    <property type="project" value="Ensembl"/>
</dbReference>
<dbReference type="GO" id="GO:0048844">
    <property type="term" value="P:artery morphogenesis"/>
    <property type="evidence" value="ECO:0000315"/>
    <property type="project" value="MGI"/>
</dbReference>
<dbReference type="GO" id="GO:0051216">
    <property type="term" value="P:cartilage development"/>
    <property type="evidence" value="ECO:0000315"/>
    <property type="project" value="MGI"/>
</dbReference>
<dbReference type="GO" id="GO:0048701">
    <property type="term" value="P:embryonic cranial skeleton morphogenesis"/>
    <property type="evidence" value="ECO:0000315"/>
    <property type="project" value="MGI"/>
</dbReference>
<dbReference type="GO" id="GO:0030326">
    <property type="term" value="P:embryonic limb morphogenesis"/>
    <property type="evidence" value="ECO:0000316"/>
    <property type="project" value="MGI"/>
</dbReference>
<dbReference type="GO" id="GO:0048704">
    <property type="term" value="P:embryonic skeletal system morphogenesis"/>
    <property type="evidence" value="ECO:0000315"/>
    <property type="project" value="MGI"/>
</dbReference>
<dbReference type="GO" id="GO:0042472">
    <property type="term" value="P:inner ear morphogenesis"/>
    <property type="evidence" value="ECO:0000316"/>
    <property type="project" value="MGI"/>
</dbReference>
<dbReference type="GO" id="GO:0010463">
    <property type="term" value="P:mesenchymal cell proliferation"/>
    <property type="evidence" value="ECO:0000316"/>
    <property type="project" value="MGI"/>
</dbReference>
<dbReference type="GO" id="GO:0042474">
    <property type="term" value="P:middle ear morphogenesis"/>
    <property type="evidence" value="ECO:0000315"/>
    <property type="project" value="MGI"/>
</dbReference>
<dbReference type="GO" id="GO:0000122">
    <property type="term" value="P:negative regulation of transcription by RNA polymerase II"/>
    <property type="evidence" value="ECO:0000314"/>
    <property type="project" value="NTNU_SB"/>
</dbReference>
<dbReference type="GO" id="GO:0048664">
    <property type="term" value="P:neuron fate determination"/>
    <property type="evidence" value="ECO:0000314"/>
    <property type="project" value="MGI"/>
</dbReference>
<dbReference type="GO" id="GO:0097150">
    <property type="term" value="P:neuronal stem cell population maintenance"/>
    <property type="evidence" value="ECO:0000314"/>
    <property type="project" value="MGI"/>
</dbReference>
<dbReference type="GO" id="GO:0002053">
    <property type="term" value="P:positive regulation of mesenchymal cell proliferation"/>
    <property type="evidence" value="ECO:0000316"/>
    <property type="project" value="MGI"/>
</dbReference>
<dbReference type="GO" id="GO:0045880">
    <property type="term" value="P:positive regulation of smoothened signaling pathway"/>
    <property type="evidence" value="ECO:0000316"/>
    <property type="project" value="MGI"/>
</dbReference>
<dbReference type="GO" id="GO:2000648">
    <property type="term" value="P:positive regulation of stem cell proliferation"/>
    <property type="evidence" value="ECO:0000316"/>
    <property type="project" value="MGI"/>
</dbReference>
<dbReference type="GO" id="GO:0045944">
    <property type="term" value="P:positive regulation of transcription by RNA polymerase II"/>
    <property type="evidence" value="ECO:0000314"/>
    <property type="project" value="MGI"/>
</dbReference>
<dbReference type="GO" id="GO:0070570">
    <property type="term" value="P:regulation of neuron projection regeneration"/>
    <property type="evidence" value="ECO:0000315"/>
    <property type="project" value="MGI"/>
</dbReference>
<dbReference type="GO" id="GO:0060021">
    <property type="term" value="P:roof of mouth development"/>
    <property type="evidence" value="ECO:0000315"/>
    <property type="project" value="MGI"/>
</dbReference>
<dbReference type="GO" id="GO:0007224">
    <property type="term" value="P:smoothened signaling pathway"/>
    <property type="evidence" value="ECO:0000316"/>
    <property type="project" value="MGI"/>
</dbReference>
<dbReference type="GO" id="GO:0072089">
    <property type="term" value="P:stem cell proliferation"/>
    <property type="evidence" value="ECO:0000316"/>
    <property type="project" value="MGI"/>
</dbReference>
<dbReference type="CDD" id="cd00086">
    <property type="entry name" value="homeodomain"/>
    <property type="match status" value="1"/>
</dbReference>
<dbReference type="FunFam" id="1.10.10.60:FF:000066">
    <property type="entry name" value="Paired mesoderm homeobox protein 1"/>
    <property type="match status" value="1"/>
</dbReference>
<dbReference type="Gene3D" id="1.10.10.60">
    <property type="entry name" value="Homeodomain-like"/>
    <property type="match status" value="1"/>
</dbReference>
<dbReference type="InterPro" id="IPR001356">
    <property type="entry name" value="HD"/>
</dbReference>
<dbReference type="InterPro" id="IPR017970">
    <property type="entry name" value="Homeobox_CS"/>
</dbReference>
<dbReference type="InterPro" id="IPR009057">
    <property type="entry name" value="Homeodomain-like_sf"/>
</dbReference>
<dbReference type="InterPro" id="IPR003654">
    <property type="entry name" value="OAR_dom"/>
</dbReference>
<dbReference type="InterPro" id="IPR043378">
    <property type="entry name" value="PRRX1/2"/>
</dbReference>
<dbReference type="PANTHER" id="PTHR46385:SF1">
    <property type="entry name" value="PAIRED MESODERM HOMEOBOX PROTEIN 1"/>
    <property type="match status" value="1"/>
</dbReference>
<dbReference type="PANTHER" id="PTHR46385">
    <property type="entry name" value="PAIRED MESODERM HOMEOBOX PROTEIN 1-RELATED"/>
    <property type="match status" value="1"/>
</dbReference>
<dbReference type="Pfam" id="PF00046">
    <property type="entry name" value="Homeodomain"/>
    <property type="match status" value="1"/>
</dbReference>
<dbReference type="Pfam" id="PF03826">
    <property type="entry name" value="OAR"/>
    <property type="match status" value="1"/>
</dbReference>
<dbReference type="SMART" id="SM00389">
    <property type="entry name" value="HOX"/>
    <property type="match status" value="1"/>
</dbReference>
<dbReference type="SUPFAM" id="SSF46689">
    <property type="entry name" value="Homeodomain-like"/>
    <property type="match status" value="1"/>
</dbReference>
<dbReference type="PROSITE" id="PS00027">
    <property type="entry name" value="HOMEOBOX_1"/>
    <property type="match status" value="1"/>
</dbReference>
<dbReference type="PROSITE" id="PS50071">
    <property type="entry name" value="HOMEOBOX_2"/>
    <property type="match status" value="1"/>
</dbReference>
<dbReference type="PROSITE" id="PS50803">
    <property type="entry name" value="OAR"/>
    <property type="match status" value="1"/>
</dbReference>
<sequence length="245" mass="27269">MTSSYGHVLERQPALGGRLDSPGNLDTLQAKKNFSVSHLLDLEEAGDMVAAQADESVGEAGRSLLESPGLTSGSDTPQQDNDQLNSEEKKKRKQRRNRTTFNSSQLQALERVFERTHYPDAFVREDLARRVNLTEARVQVWFQNRRAKFRRNERAMLANKNASLLKSYSGDVTAVEQPIVPRPAPRPTDYLSWGTASPYSAMATYSATCANNSPAQGINMANSIANLRLKAKEYSLQRNQVPTVN</sequence>
<reference key="1">
    <citation type="journal article" date="1992" name="Development">
        <title>MHox: a mesodermally restricted homeodomain protein that binds an essential site in the muscle creatine kinase enhancer.</title>
        <authorList>
            <person name="Cserjesi P."/>
            <person name="Lilly B."/>
            <person name="Bryson L."/>
            <person name="Wang Y."/>
            <person name="Sassoon D.A."/>
            <person name="Olson E.N."/>
        </authorList>
    </citation>
    <scope>NUCLEOTIDE SEQUENCE [MRNA] (ISOFORM 2)</scope>
    <scope>FUNCTION</scope>
    <scope>TISSUE SPECIFICITY</scope>
    <scope>DEVELOPMENTAL STAGE</scope>
</reference>
<reference key="2">
    <citation type="journal article" date="1994" name="Genomics">
        <title>Genomic organization and chromosome localization of the murine homeobox gene Pmx.</title>
        <authorList>
            <person name="Kern M.J."/>
            <person name="Argao E.A."/>
            <person name="Birkenmeier E.H."/>
            <person name="Rowe L.B."/>
            <person name="Potter S.S."/>
        </authorList>
    </citation>
    <scope>NUCLEOTIDE SEQUENCE [MRNA] (ISOFORM 2)</scope>
</reference>
<reference key="3">
    <citation type="journal article" date="1992" name="Nucleic Acids Res.">
        <title>A novel murine homeobox gene isolated by a tissue specific PCR cloning strategy.</title>
        <authorList>
            <person name="Kern M.J."/>
            <person name="Witte D.P."/>
            <person name="Valerius M.T."/>
            <person name="Aronow B.J."/>
            <person name="Potter S.S."/>
        </authorList>
    </citation>
    <scope>NUCLEOTIDE SEQUENCE [MRNA] (ISOFORM 1)</scope>
    <source>
        <strain>CD-1</strain>
        <tissue>Embryo</tissue>
    </source>
</reference>
<reference key="4">
    <citation type="journal article" date="2004" name="Genome Res.">
        <title>The status, quality, and expansion of the NIH full-length cDNA project: the Mammalian Gene Collection (MGC).</title>
        <authorList>
            <consortium name="The MGC Project Team"/>
        </authorList>
    </citation>
    <scope>NUCLEOTIDE SEQUENCE [LARGE SCALE MRNA] (ISOFORM 2)</scope>
    <source>
        <strain>C57BL/6J</strain>
        <tissue>Brain</tissue>
    </source>
</reference>
<reference key="5">
    <citation type="journal article" date="2001" name="J. Biol. Chem.">
        <title>The identification of Prx1 transcription regulatory domains provides a mechanism for unequal compensation by the Prx1 and Prx2 loci.</title>
        <authorList>
            <person name="Norris R.A."/>
            <person name="Kern M.J."/>
        </authorList>
    </citation>
    <scope>FUNCTION</scope>
    <scope>DOMAIN</scope>
    <scope>MUTAGENESIS OF SER-223; ASN-226 AND ARG-228</scope>
</reference>
<reference key="6">
    <citation type="journal article" date="2013" name="Mol. Cell">
        <title>SIRT5-mediated lysine desuccinylation impacts diverse metabolic pathways.</title>
        <authorList>
            <person name="Park J."/>
            <person name="Chen Y."/>
            <person name="Tishkoff D.X."/>
            <person name="Peng C."/>
            <person name="Tan M."/>
            <person name="Dai L."/>
            <person name="Xie Z."/>
            <person name="Zhang Y."/>
            <person name="Zwaans B.M."/>
            <person name="Skinner M.E."/>
            <person name="Lombard D.B."/>
            <person name="Zhao Y."/>
        </authorList>
    </citation>
    <scope>ACETYLATION [LARGE SCALE ANALYSIS] AT LYS-160</scope>
    <scope>IDENTIFICATION BY MASS SPECTROMETRY [LARGE SCALE ANALYSIS]</scope>
    <source>
        <tissue>Embryonic fibroblast</tissue>
    </source>
</reference>
<reference key="7">
    <citation type="journal article" date="2022" name="Nat. Commun.">
        <title>PRRX1 is a master transcription factor of stromal fibroblasts for myofibroblastic lineage progression.</title>
        <authorList>
            <person name="Lee K.W."/>
            <person name="Yeo S.Y."/>
            <person name="Gong J.R."/>
            <person name="Koo O.J."/>
            <person name="Sohn I."/>
            <person name="Lee W.Y."/>
            <person name="Kim H.C."/>
            <person name="Yun S.H."/>
            <person name="Cho Y.B."/>
            <person name="Choi M.A."/>
            <person name="An S."/>
            <person name="Kim J."/>
            <person name="Sung C.O."/>
            <person name="Cho K.H."/>
            <person name="Kim S.H."/>
        </authorList>
    </citation>
    <scope>FUNCTION</scope>
    <scope>INTERACTION WITH SMAD3</scope>
    <scope>SUBCELLULAR LOCATION</scope>
</reference>
<reference key="8">
    <citation type="journal article" date="2022" name="Nat. Genet.">
        <title>Prrx1 marks stem cells for bone, white adipose tissue and dermis in adult mice.</title>
        <authorList>
            <person name="Liu H."/>
            <person name="Li P."/>
            <person name="Zhang S."/>
            <person name="Xiang J."/>
            <person name="Yang R."/>
            <person name="Liu J."/>
            <person name="Shafiquzzaman M."/>
            <person name="Biswas S."/>
            <person name="Wei Z."/>
            <person name="Zhang Z."/>
            <person name="Zhou X."/>
            <person name="Yin F."/>
            <person name="Xie Y."/>
            <person name="Goff S.P."/>
            <person name="Chen L."/>
            <person name="Li B."/>
        </authorList>
    </citation>
    <scope>FUNCTION</scope>
    <scope>IDENTIFICATION IN ADULT STEM CELLS</scope>
    <scope>DEVELOPMENTAL STAGE</scope>
    <scope>TISSUE SPECIFICITY</scope>
</reference>
<evidence type="ECO:0000250" key="1">
    <source>
        <dbReference type="UniProtKB" id="P63014"/>
    </source>
</evidence>
<evidence type="ECO:0000255" key="2"/>
<evidence type="ECO:0000255" key="3">
    <source>
        <dbReference type="PROSITE-ProRule" id="PRU00108"/>
    </source>
</evidence>
<evidence type="ECO:0000255" key="4">
    <source>
        <dbReference type="PROSITE-ProRule" id="PRU00138"/>
    </source>
</evidence>
<evidence type="ECO:0000256" key="5">
    <source>
        <dbReference type="SAM" id="MobiDB-lite"/>
    </source>
</evidence>
<evidence type="ECO:0000269" key="6">
    <source>
    </source>
</evidence>
<evidence type="ECO:0000269" key="7">
    <source>
    </source>
</evidence>
<evidence type="ECO:0000269" key="8">
    <source>
    </source>
</evidence>
<evidence type="ECO:0000269" key="9">
    <source>
    </source>
</evidence>
<evidence type="ECO:0000303" key="10">
    <source>
    </source>
</evidence>
<evidence type="ECO:0000303" key="11">
    <source>
    </source>
</evidence>
<evidence type="ECO:0000303" key="12">
    <source>
    </source>
</evidence>
<evidence type="ECO:0000303" key="13">
    <source>
    </source>
</evidence>
<evidence type="ECO:0000305" key="14"/>
<evidence type="ECO:0007744" key="15">
    <source>
    </source>
</evidence>
<organism>
    <name type="scientific">Mus musculus</name>
    <name type="common">Mouse</name>
    <dbReference type="NCBI Taxonomy" id="10090"/>
    <lineage>
        <taxon>Eukaryota</taxon>
        <taxon>Metazoa</taxon>
        <taxon>Chordata</taxon>
        <taxon>Craniata</taxon>
        <taxon>Vertebrata</taxon>
        <taxon>Euteleostomi</taxon>
        <taxon>Mammalia</taxon>
        <taxon>Eutheria</taxon>
        <taxon>Euarchontoglires</taxon>
        <taxon>Glires</taxon>
        <taxon>Rodentia</taxon>
        <taxon>Myomorpha</taxon>
        <taxon>Muroidea</taxon>
        <taxon>Muridae</taxon>
        <taxon>Murinae</taxon>
        <taxon>Mus</taxon>
        <taxon>Mus</taxon>
    </lineage>
</organism>
<name>PRRX1_MOUSE</name>
<accession>P63013</accession>
<accession>P43271</accession>
<accession>Q02810</accession>
<accession>Q569N6</accession>
<protein>
    <recommendedName>
        <fullName>Paired mesoderm homeobox protein 1</fullName>
    </recommendedName>
    <alternativeName>
        <fullName>Homeobox protein K-2</fullName>
    </alternativeName>
    <alternativeName>
        <fullName evidence="11">Muscle homeobox protein</fullName>
        <shortName evidence="11">MHox</shortName>
    </alternativeName>
    <alternativeName>
        <fullName>Paired-related homeobox protein 1</fullName>
        <shortName>PRX-1</shortName>
    </alternativeName>
</protein>